<feature type="signal peptide" evidence="2">
    <location>
        <begin position="1"/>
        <end position="17"/>
    </location>
</feature>
<feature type="chain" id="PRO_0000422465" description="Spike glycoprotein">
    <location>
        <begin position="18"/>
        <end position="1353"/>
    </location>
</feature>
<feature type="chain" id="PRO_0000422466" description="Spike protein S1">
    <location>
        <begin position="18"/>
        <end position="751"/>
    </location>
</feature>
<feature type="chain" id="PRO_0000422467" description="Spike protein S2">
    <location>
        <begin position="752"/>
        <end position="1353"/>
    </location>
</feature>
<feature type="chain" id="PRO_0000444090" description="Spike protein S2'" evidence="2">
    <location>
        <begin position="888"/>
        <end position="1353"/>
    </location>
</feature>
<feature type="topological domain" description="Extracellular" evidence="2">
    <location>
        <begin position="18"/>
        <end position="1296"/>
    </location>
</feature>
<feature type="transmembrane region" description="Helical" evidence="2">
    <location>
        <begin position="1297"/>
        <end position="1317"/>
    </location>
</feature>
<feature type="topological domain" description="Cytoplasmic" evidence="2">
    <location>
        <begin position="1318"/>
        <end position="1353"/>
    </location>
</feature>
<feature type="domain" description="BetaCoV S1-NTD" evidence="4">
    <location>
        <begin position="18"/>
        <end position="351"/>
    </location>
</feature>
<feature type="domain" description="BetaCoV S1-CTD" evidence="3">
    <location>
        <begin position="381"/>
        <end position="587"/>
    </location>
</feature>
<feature type="region of interest" description="Fusion peptide 1" evidence="2">
    <location>
        <begin position="888"/>
        <end position="909"/>
    </location>
</feature>
<feature type="region of interest" description="Fusion peptide 2" evidence="2">
    <location>
        <begin position="907"/>
        <end position="929"/>
    </location>
</feature>
<feature type="region of interest" description="Heptad repeat 1" evidence="2">
    <location>
        <begin position="994"/>
        <end position="1044"/>
    </location>
</feature>
<feature type="region of interest" description="Heptad repeat 2" evidence="2">
    <location>
        <begin position="1246"/>
        <end position="1285"/>
    </location>
</feature>
<feature type="coiled-coil region" evidence="2">
    <location>
        <begin position="1023"/>
        <end position="1067"/>
    </location>
</feature>
<feature type="coiled-coil region" evidence="2">
    <location>
        <begin position="1258"/>
        <end position="1286"/>
    </location>
</feature>
<feature type="short sequence motif" description="KxHxx" evidence="2">
    <location>
        <begin position="1351"/>
        <end position="1353"/>
    </location>
</feature>
<feature type="site" description="Cleavage; by host" evidence="1">
    <location>
        <begin position="751"/>
        <end position="752"/>
    </location>
</feature>
<feature type="site" description="Cleavage" evidence="2">
    <location>
        <begin position="887"/>
        <end position="888"/>
    </location>
</feature>
<feature type="glycosylation site" description="N-linked (GlcNAc...) asparagine; by host" evidence="2">
    <location>
        <position position="66"/>
    </location>
</feature>
<feature type="glycosylation site" description="N-linked (GlcNAc...) asparagine; by host" evidence="2">
    <location>
        <position position="104"/>
    </location>
</feature>
<feature type="glycosylation site" description="N-linked (GlcNAc...) asparagine; by host" evidence="2">
    <location>
        <position position="125"/>
    </location>
</feature>
<feature type="glycosylation site" description="N-linked (GlcNAc...) asparagine; by host" evidence="2">
    <location>
        <position position="155"/>
    </location>
</feature>
<feature type="glycosylation site" description="N-linked (GlcNAc...) asparagine; by host" evidence="2">
    <location>
        <position position="166"/>
    </location>
</feature>
<feature type="glycosylation site" description="N-linked (GlcNAc...) asparagine; by host" evidence="2">
    <location>
        <position position="222"/>
    </location>
</feature>
<feature type="glycosylation site" description="N-linked (GlcNAc...) asparagine; by host" evidence="2">
    <location>
        <position position="236"/>
    </location>
</feature>
<feature type="glycosylation site" description="N-linked (GlcNAc...) asparagine; by host" evidence="2">
    <location>
        <position position="244"/>
    </location>
</feature>
<feature type="glycosylation site" description="N-linked (GlcNAc...) asparagine; by host" evidence="2">
    <location>
        <position position="410"/>
    </location>
</feature>
<feature type="glycosylation site" description="N-linked (GlcNAc...) asparagine; by host" evidence="2">
    <location>
        <position position="487"/>
    </location>
</feature>
<feature type="glycosylation site" description="N-linked (GlcNAc...) asparagine; by host" evidence="2">
    <location>
        <position position="592"/>
    </location>
</feature>
<feature type="glycosylation site" description="N-linked (GlcNAc...) asparagine; by host" evidence="2">
    <location>
        <position position="619"/>
    </location>
</feature>
<feature type="glycosylation site" description="N-linked (GlcNAc...) asparagine; by host" evidence="2">
    <location>
        <position position="719"/>
    </location>
</feature>
<feature type="glycosylation site" description="N-linked (GlcNAc...) asparagine; by host" evidence="2">
    <location>
        <position position="774"/>
    </location>
</feature>
<feature type="glycosylation site" description="N-linked (GlcNAc...) asparagine; by host" evidence="2">
    <location>
        <position position="785"/>
    </location>
</feature>
<feature type="glycosylation site" description="N-linked (GlcNAc...) asparagine; by host" evidence="2">
    <location>
        <position position="870"/>
    </location>
</feature>
<feature type="glycosylation site" description="N-linked (GlcNAc...) asparagine; by host" evidence="2">
    <location>
        <position position="1176"/>
    </location>
</feature>
<feature type="glycosylation site" description="N-linked (GlcNAc...) asparagine; by host" evidence="2">
    <location>
        <position position="1213"/>
    </location>
</feature>
<feature type="glycosylation site" description="N-linked (GlcNAc...) asparagine; by host" evidence="2">
    <location>
        <position position="1225"/>
    </location>
</feature>
<feature type="glycosylation site" description="N-linked (GlcNAc...) asparagine; by host" evidence="2">
    <location>
        <position position="1241"/>
    </location>
</feature>
<feature type="glycosylation site" description="N-linked (GlcNAc...) asparagine; by host" evidence="2">
    <location>
        <position position="1256"/>
    </location>
</feature>
<feature type="glycosylation site" description="N-linked (GlcNAc...) asparagine; by host" evidence="2">
    <location>
        <position position="1277"/>
    </location>
</feature>
<feature type="glycosylation site" description="N-linked (GlcNAc...) asparagine; by host" evidence="2">
    <location>
        <position position="1288"/>
    </location>
</feature>
<feature type="disulfide bond" evidence="4">
    <location>
        <begin position="185"/>
        <end position="237"/>
    </location>
</feature>
<feature type="disulfide bond" evidence="4">
    <location>
        <begin position="339"/>
        <end position="349"/>
    </location>
</feature>
<feature type="disulfide bond" evidence="3">
    <location>
        <begin position="383"/>
        <end position="407"/>
    </location>
</feature>
<feature type="disulfide bond" evidence="3">
    <location>
        <begin position="425"/>
        <end position="478"/>
    </location>
</feature>
<feature type="disulfide bond" evidence="3">
    <location>
        <begin position="437"/>
        <end position="585"/>
    </location>
</feature>
<feature type="disulfide bond" evidence="2">
    <location>
        <begin position="912"/>
        <end position="925"/>
    </location>
</feature>
<feature type="strand" evidence="9">
    <location>
        <begin position="27"/>
        <end position="29"/>
    </location>
</feature>
<feature type="strand" evidence="8">
    <location>
        <begin position="33"/>
        <end position="35"/>
    </location>
</feature>
<feature type="helix" evidence="8">
    <location>
        <begin position="37"/>
        <end position="40"/>
    </location>
</feature>
<feature type="helix" evidence="8">
    <location>
        <begin position="50"/>
        <end position="52"/>
    </location>
</feature>
<feature type="turn" evidence="8">
    <location>
        <begin position="53"/>
        <end position="55"/>
    </location>
</feature>
<feature type="strand" evidence="16">
    <location>
        <begin position="59"/>
        <end position="61"/>
    </location>
</feature>
<feature type="strand" evidence="8">
    <location>
        <begin position="66"/>
        <end position="75"/>
    </location>
</feature>
<feature type="strand" evidence="8">
    <location>
        <begin position="83"/>
        <end position="85"/>
    </location>
</feature>
<feature type="strand" evidence="15">
    <location>
        <begin position="91"/>
        <end position="95"/>
    </location>
</feature>
<feature type="strand" evidence="8">
    <location>
        <begin position="99"/>
        <end position="102"/>
    </location>
</feature>
<feature type="helix" evidence="8">
    <location>
        <begin position="105"/>
        <end position="107"/>
    </location>
</feature>
<feature type="strand" evidence="8">
    <location>
        <begin position="116"/>
        <end position="121"/>
    </location>
</feature>
<feature type="turn" evidence="8">
    <location>
        <begin position="122"/>
        <end position="125"/>
    </location>
</feature>
<feature type="strand" evidence="8">
    <location>
        <begin position="126"/>
        <end position="129"/>
    </location>
</feature>
<feature type="strand" evidence="8">
    <location>
        <begin position="131"/>
        <end position="133"/>
    </location>
</feature>
<feature type="strand" evidence="8">
    <location>
        <begin position="137"/>
        <end position="141"/>
    </location>
</feature>
<feature type="strand" evidence="8">
    <location>
        <begin position="147"/>
        <end position="151"/>
    </location>
</feature>
<feature type="strand" evidence="8">
    <location>
        <begin position="153"/>
        <end position="155"/>
    </location>
</feature>
<feature type="strand" evidence="8">
    <location>
        <begin position="161"/>
        <end position="164"/>
    </location>
</feature>
<feature type="strand" evidence="8">
    <location>
        <begin position="166"/>
        <end position="174"/>
    </location>
</feature>
<feature type="turn" evidence="8">
    <location>
        <begin position="175"/>
        <end position="178"/>
    </location>
</feature>
<feature type="strand" evidence="8">
    <location>
        <begin position="179"/>
        <end position="189"/>
    </location>
</feature>
<feature type="strand" evidence="9">
    <location>
        <begin position="198"/>
        <end position="200"/>
    </location>
</feature>
<feature type="strand" evidence="8">
    <location>
        <begin position="206"/>
        <end position="208"/>
    </location>
</feature>
<feature type="helix" evidence="8">
    <location>
        <begin position="210"/>
        <end position="213"/>
    </location>
</feature>
<feature type="strand" evidence="12">
    <location>
        <begin position="216"/>
        <end position="219"/>
    </location>
</feature>
<feature type="helix" evidence="8">
    <location>
        <begin position="223"/>
        <end position="231"/>
    </location>
</feature>
<feature type="strand" evidence="8">
    <location>
        <begin position="232"/>
        <end position="244"/>
    </location>
</feature>
<feature type="strand" evidence="8">
    <location>
        <begin position="252"/>
        <end position="259"/>
    </location>
</feature>
<feature type="strand" evidence="8">
    <location>
        <begin position="262"/>
        <end position="268"/>
    </location>
</feature>
<feature type="turn" evidence="8">
    <location>
        <begin position="269"/>
        <end position="271"/>
    </location>
</feature>
<feature type="turn" evidence="8">
    <location>
        <begin position="273"/>
        <end position="275"/>
    </location>
</feature>
<feature type="strand" evidence="8">
    <location>
        <begin position="278"/>
        <end position="284"/>
    </location>
</feature>
<feature type="strand" evidence="8">
    <location>
        <begin position="292"/>
        <end position="295"/>
    </location>
</feature>
<feature type="strand" evidence="8">
    <location>
        <begin position="298"/>
        <end position="300"/>
    </location>
</feature>
<feature type="helix" evidence="8">
    <location>
        <begin position="304"/>
        <end position="306"/>
    </location>
</feature>
<feature type="strand" evidence="8">
    <location>
        <begin position="313"/>
        <end position="317"/>
    </location>
</feature>
<feature type="strand" evidence="8">
    <location>
        <begin position="319"/>
        <end position="327"/>
    </location>
</feature>
<feature type="strand" evidence="8">
    <location>
        <begin position="333"/>
        <end position="338"/>
    </location>
</feature>
<feature type="helix" evidence="8">
    <location>
        <begin position="339"/>
        <end position="341"/>
    </location>
</feature>
<feature type="helix" evidence="8">
    <location>
        <begin position="343"/>
        <end position="349"/>
    </location>
</feature>
<feature type="turn" evidence="7">
    <location>
        <begin position="351"/>
        <end position="353"/>
    </location>
</feature>
<feature type="strand" evidence="15">
    <location>
        <begin position="358"/>
        <end position="368"/>
    </location>
</feature>
<feature type="strand" evidence="15">
    <location>
        <begin position="373"/>
        <end position="376"/>
    </location>
</feature>
<feature type="helix" evidence="18">
    <location>
        <begin position="386"/>
        <end position="389"/>
    </location>
</feature>
<feature type="helix" evidence="18">
    <location>
        <begin position="396"/>
        <end position="398"/>
    </location>
</feature>
<feature type="strand" evidence="18">
    <location>
        <begin position="400"/>
        <end position="404"/>
    </location>
</feature>
<feature type="strand" evidence="10">
    <location>
        <begin position="406"/>
        <end position="409"/>
    </location>
</feature>
<feature type="helix" evidence="18">
    <location>
        <begin position="411"/>
        <end position="415"/>
    </location>
</feature>
<feature type="strand" evidence="18">
    <location>
        <begin position="418"/>
        <end position="428"/>
    </location>
</feature>
<feature type="helix" evidence="18">
    <location>
        <begin position="430"/>
        <end position="433"/>
    </location>
</feature>
<feature type="strand" evidence="18">
    <location>
        <begin position="438"/>
        <end position="447"/>
    </location>
</feature>
<feature type="helix" evidence="18">
    <location>
        <begin position="450"/>
        <end position="456"/>
    </location>
</feature>
<feature type="helix" evidence="18">
    <location>
        <begin position="458"/>
        <end position="460"/>
    </location>
</feature>
<feature type="helix" evidence="18">
    <location>
        <begin position="463"/>
        <end position="467"/>
    </location>
</feature>
<feature type="strand" evidence="18">
    <location>
        <begin position="473"/>
        <end position="475"/>
    </location>
</feature>
<feature type="strand" evidence="18">
    <location>
        <begin position="477"/>
        <end position="483"/>
    </location>
</feature>
<feature type="strand" evidence="13">
    <location>
        <begin position="485"/>
        <end position="487"/>
    </location>
</feature>
<feature type="strand" evidence="13">
    <location>
        <begin position="489"/>
        <end position="491"/>
    </location>
</feature>
<feature type="strand" evidence="18">
    <location>
        <begin position="495"/>
        <end position="506"/>
    </location>
</feature>
<feature type="strand" evidence="15">
    <location>
        <begin position="508"/>
        <end position="511"/>
    </location>
</feature>
<feature type="strand" evidence="18">
    <location>
        <begin position="513"/>
        <end position="515"/>
    </location>
</feature>
<feature type="turn" evidence="18">
    <location>
        <begin position="525"/>
        <end position="529"/>
    </location>
</feature>
<feature type="strand" evidence="18">
    <location>
        <begin position="540"/>
        <end position="544"/>
    </location>
</feature>
<feature type="turn" evidence="18">
    <location>
        <begin position="547"/>
        <end position="550"/>
    </location>
</feature>
<feature type="strand" evidence="18">
    <location>
        <begin position="551"/>
        <end position="562"/>
    </location>
</feature>
<feature type="strand" evidence="18">
    <location>
        <begin position="568"/>
        <end position="576"/>
    </location>
</feature>
<feature type="strand" evidence="18">
    <location>
        <begin position="584"/>
        <end position="586"/>
    </location>
</feature>
<feature type="helix" evidence="15">
    <location>
        <begin position="592"/>
        <end position="594"/>
    </location>
</feature>
<feature type="turn" evidence="16">
    <location>
        <begin position="596"/>
        <end position="601"/>
    </location>
</feature>
<feature type="strand" evidence="15">
    <location>
        <begin position="602"/>
        <end position="608"/>
    </location>
</feature>
<feature type="strand" evidence="15">
    <location>
        <begin position="611"/>
        <end position="619"/>
    </location>
</feature>
<feature type="turn" evidence="16">
    <location>
        <begin position="626"/>
        <end position="628"/>
    </location>
</feature>
<feature type="strand" evidence="15">
    <location>
        <begin position="630"/>
        <end position="632"/>
    </location>
</feature>
<feature type="strand" evidence="13">
    <location>
        <begin position="634"/>
        <end position="637"/>
    </location>
</feature>
<feature type="strand" evidence="15">
    <location>
        <begin position="638"/>
        <end position="642"/>
    </location>
</feature>
<feature type="strand" evidence="13">
    <location>
        <begin position="643"/>
        <end position="647"/>
    </location>
</feature>
<feature type="strand" evidence="15">
    <location>
        <begin position="648"/>
        <end position="651"/>
    </location>
</feature>
<feature type="strand" evidence="15">
    <location>
        <begin position="657"/>
        <end position="664"/>
    </location>
</feature>
<feature type="turn" evidence="15">
    <location>
        <begin position="665"/>
        <end position="668"/>
    </location>
</feature>
<feature type="strand" evidence="15">
    <location>
        <begin position="669"/>
        <end position="674"/>
    </location>
</feature>
<feature type="strand" evidence="15">
    <location>
        <begin position="679"/>
        <end position="681"/>
    </location>
</feature>
<feature type="strand" evidence="17">
    <location>
        <begin position="688"/>
        <end position="690"/>
    </location>
</feature>
<feature type="strand" evidence="17">
    <location>
        <begin position="692"/>
        <end position="695"/>
    </location>
</feature>
<feature type="strand" evidence="12">
    <location>
        <begin position="707"/>
        <end position="709"/>
    </location>
</feature>
<feature type="strand" evidence="15">
    <location>
        <begin position="713"/>
        <end position="725"/>
    </location>
</feature>
<feature type="strand" evidence="15">
    <location>
        <begin position="728"/>
        <end position="732"/>
    </location>
</feature>
<feature type="strand" evidence="15">
    <location>
        <begin position="735"/>
        <end position="738"/>
    </location>
</feature>
<feature type="strand" evidence="15">
    <location>
        <begin position="757"/>
        <end position="762"/>
    </location>
</feature>
<feature type="strand" evidence="15">
    <location>
        <begin position="774"/>
        <end position="796"/>
    </location>
</feature>
<feature type="strand" evidence="15">
    <location>
        <begin position="802"/>
        <end position="804"/>
    </location>
</feature>
<feature type="helix" evidence="15">
    <location>
        <begin position="806"/>
        <end position="811"/>
    </location>
</feature>
<feature type="helix" evidence="15">
    <location>
        <begin position="815"/>
        <end position="822"/>
    </location>
</feature>
<feature type="turn" evidence="14">
    <location>
        <begin position="823"/>
        <end position="825"/>
    </location>
</feature>
<feature type="helix" evidence="15">
    <location>
        <begin position="827"/>
        <end position="853"/>
    </location>
</feature>
<feature type="strand" evidence="15">
    <location>
        <begin position="856"/>
        <end position="858"/>
    </location>
</feature>
<feature type="turn" evidence="15">
    <location>
        <begin position="863"/>
        <end position="868"/>
    </location>
</feature>
<feature type="turn" evidence="15">
    <location>
        <begin position="872"/>
        <end position="874"/>
    </location>
</feature>
<feature type="helix" evidence="15">
    <location>
        <begin position="889"/>
        <end position="897"/>
    </location>
</feature>
<feature type="strand" evidence="15">
    <location>
        <begin position="905"/>
        <end position="907"/>
    </location>
</feature>
<feature type="helix" evidence="15">
    <location>
        <begin position="908"/>
        <end position="914"/>
    </location>
</feature>
<feature type="turn" evidence="15">
    <location>
        <begin position="923"/>
        <end position="925"/>
    </location>
</feature>
<feature type="helix" evidence="15">
    <location>
        <begin position="927"/>
        <end position="930"/>
    </location>
</feature>
<feature type="strand" evidence="15">
    <location>
        <begin position="932"/>
        <end position="934"/>
    </location>
</feature>
<feature type="helix" evidence="15">
    <location>
        <begin position="941"/>
        <end position="952"/>
    </location>
</feature>
<feature type="helix" evidence="12">
    <location>
        <begin position="955"/>
        <end position="958"/>
    </location>
</feature>
<feature type="turn" evidence="15">
    <location>
        <begin position="960"/>
        <end position="964"/>
    </location>
</feature>
<feature type="strand" evidence="15">
    <location>
        <begin position="967"/>
        <end position="969"/>
    </location>
</feature>
<feature type="helix" evidence="15">
    <location>
        <begin position="972"/>
        <end position="981"/>
    </location>
</feature>
<feature type="turn" evidence="15">
    <location>
        <begin position="982"/>
        <end position="984"/>
    </location>
</feature>
<feature type="helix" evidence="15">
    <location>
        <begin position="987"/>
        <end position="992"/>
    </location>
</feature>
<feature type="helix" evidence="6">
    <location>
        <begin position="995"/>
        <end position="1038"/>
    </location>
</feature>
<feature type="strand" evidence="14">
    <location>
        <begin position="1041"/>
        <end position="1043"/>
    </location>
</feature>
<feature type="strand" evidence="15">
    <location>
        <begin position="1044"/>
        <end position="1047"/>
    </location>
</feature>
<feature type="helix" evidence="15">
    <location>
        <begin position="1051"/>
        <end position="1055"/>
    </location>
</feature>
<feature type="helix" evidence="15">
    <location>
        <begin position="1060"/>
        <end position="1106"/>
    </location>
</feature>
<feature type="turn" evidence="12">
    <location>
        <begin position="1114"/>
        <end position="1116"/>
    </location>
</feature>
<feature type="strand" evidence="15">
    <location>
        <begin position="1119"/>
        <end position="1130"/>
    </location>
</feature>
<feature type="strand" evidence="15">
    <location>
        <begin position="1133"/>
        <end position="1153"/>
    </location>
</feature>
<feature type="strand" evidence="15">
    <location>
        <begin position="1155"/>
        <end position="1160"/>
    </location>
</feature>
<feature type="strand" evidence="15">
    <location>
        <begin position="1164"/>
        <end position="1174"/>
    </location>
</feature>
<feature type="strand" evidence="15">
    <location>
        <begin position="1177"/>
        <end position="1180"/>
    </location>
</feature>
<feature type="strand" evidence="15">
    <location>
        <begin position="1184"/>
        <end position="1188"/>
    </location>
</feature>
<feature type="strand" evidence="15">
    <location>
        <begin position="1191"/>
        <end position="1195"/>
    </location>
</feature>
<feature type="strand" evidence="15">
    <location>
        <begin position="1201"/>
        <end position="1205"/>
    </location>
</feature>
<feature type="strand" evidence="15">
    <location>
        <begin position="1211"/>
        <end position="1214"/>
    </location>
</feature>
<feature type="helix" evidence="15">
    <location>
        <begin position="1220"/>
        <end position="1222"/>
    </location>
</feature>
<feature type="helix" evidence="11">
    <location>
        <begin position="1231"/>
        <end position="1239"/>
    </location>
</feature>
<feature type="helix" evidence="6">
    <location>
        <begin position="1263"/>
        <end position="1277"/>
    </location>
</feature>
<organism>
    <name type="scientific">Middle East respiratory syndrome-related coronavirus (isolate United Kingdom/H123990006/2012)</name>
    <name type="common">MERS-CoV</name>
    <name type="synonym">Betacoronavirus England 1</name>
    <dbReference type="NCBI Taxonomy" id="1263720"/>
    <lineage>
        <taxon>Viruses</taxon>
        <taxon>Riboviria</taxon>
        <taxon>Orthornavirae</taxon>
        <taxon>Pisuviricota</taxon>
        <taxon>Pisoniviricetes</taxon>
        <taxon>Nidovirales</taxon>
        <taxon>Cornidovirineae</taxon>
        <taxon>Coronaviridae</taxon>
        <taxon>Orthocoronavirinae</taxon>
        <taxon>Betacoronavirus</taxon>
        <taxon>Merbecovirus</taxon>
        <taxon>Middle East respiratory syndrome-related coronavirus</taxon>
    </lineage>
</organism>
<gene>
    <name evidence="2" type="primary">S</name>
    <name type="ORF">3</name>
</gene>
<organismHost>
    <name type="scientific">Camelus dromedarius</name>
    <name type="common">Dromedary</name>
    <name type="synonym">Arabian camel</name>
    <dbReference type="NCBI Taxonomy" id="9838"/>
</organismHost>
<organismHost>
    <name type="scientific">Homo sapiens</name>
    <name type="common">Human</name>
    <dbReference type="NCBI Taxonomy" id="9606"/>
</organismHost>
<protein>
    <recommendedName>
        <fullName evidence="2">Spike glycoprotein</fullName>
        <shortName evidence="2">S glycoprotein</shortName>
    </recommendedName>
    <alternativeName>
        <fullName evidence="2">E2</fullName>
    </alternativeName>
    <alternativeName>
        <fullName evidence="2">Peplomer protein</fullName>
    </alternativeName>
    <component>
        <recommendedName>
            <fullName evidence="2">Spike protein S1</fullName>
        </recommendedName>
    </component>
    <component>
        <recommendedName>
            <fullName evidence="2">Spike protein S2</fullName>
        </recommendedName>
    </component>
    <component>
        <recommendedName>
            <fullName evidence="2">Spike protein S2'</fullName>
        </recommendedName>
    </component>
</protein>
<reference key="1">
    <citation type="journal article" date="2012" name="Eurosurveillance">
        <title>Severe respiratory illness caused by a novel coronavirus, in a patient transferred to the United Kingdom from the Middle East, September 2012.</title>
        <authorList>
            <person name="Bermingham A."/>
            <person name="Chand M.A."/>
            <person name="Brown C.S."/>
            <person name="Aarons E."/>
            <person name="Tong C."/>
            <person name="Langrish C."/>
            <person name="Hoschler K."/>
            <person name="Brown K."/>
            <person name="Galiano M."/>
            <person name="Myers R."/>
            <person name="Pebody R.G."/>
            <person name="Green H.K."/>
            <person name="Boddington N.L."/>
            <person name="Gopal R."/>
            <person name="Price N."/>
            <person name="Newsholme W."/>
            <person name="Drosten C."/>
            <person name="Fouchier R.A."/>
            <person name="Zambon M."/>
        </authorList>
    </citation>
    <scope>NUCLEOTIDE SEQUENCE [GENOMIC RNA]</scope>
</reference>
<reference key="2">
    <citation type="journal article" date="2013" name="Nature">
        <title>Dipeptidyl peptidase 4 is a functional receptor for the emerging human coronavirus-EMC.</title>
        <authorList>
            <person name="Raj V.S."/>
            <person name="Mou H."/>
            <person name="Smits S.L."/>
            <person name="Dekkers D.H."/>
            <person name="Muller M.A."/>
            <person name="Dijkman R."/>
            <person name="Muth D."/>
            <person name="Demmers J.A."/>
            <person name="Zaki A."/>
            <person name="Fouchier R.A."/>
            <person name="Thiel V."/>
            <person name="Drosten C."/>
            <person name="Rottier P.J."/>
            <person name="Osterhaus A.D."/>
            <person name="Bosch B.J."/>
            <person name="Haagmans B.L."/>
        </authorList>
    </citation>
    <scope>FUNCTION</scope>
    <scope>INTERACTION WITH HOST DPP4</scope>
</reference>
<sequence length="1353" mass="149411">MIHSVFLLMFLLTPTESYVDVGPDSVKSACIEVDIQQTFFDKTWPRPIDVSKADGIIYPQGRTYSNITITYQGLFPYQGDHGDMYVYSAGHATGTTPQKLFVANYSQDVKQFANGFVVRIGAAANSTGTVIISPSTSATIRKIYPAFMLGSSVGNFSDGKMGRFFNHTLVLLPDGCGTLLRAFYCILEPRSGNHCPAGNSYTSFATYHTPATDCSDGNYNRNASLNSFKEYFNLRNCTFMYTYNITEDEILEWFGITQTAQGVHLFSSRYVDLYGGNMFQFATLPVYDTIKYYSIIPHSIRSIQSDRKAWAAFYVYKLQPLTFLLDFSVDGYIRRAIDCGFNDLSQLHCSYESFDVESGVYSVSSFEAKPSGSVVEQAEGVECDFSPLLSGTPPQVYNFKRLVFTNCNYNLTKLLSLFSVNDFTCSQISPAAIASNCYSSLILDYFSYPLSMKSDLSVSSAGPISQFNYKQSFSNPTCLILATVPHNLTTITKPLKYSYINKCSRFLSDDRTEVPQLVNANQYSPCVSIVPSTVWEDGDYYRKQLSPLEGGGWLVASGSTVAMTEQLQMGFGITVQYGTDTNSVCPKLEFANDTKIASQLGNCVEYSLYGVSGRGVFQNCTAVGVRQQRFVYDAYQNLVGYYSDDGNYYCLRACVSVPVSVIYDKETKTHATLFGSVACEHISSTMSQYSRSTRSMLKRRDSTYGPLQTPVGCVLGLVNSSLFVEDCKLPLGQSLCALPDTPSTLTPRSVRSVPGEMRLASIAFNHPIQVDQLNSSYFKLSIPTNFSFGVTQEYIQTTIQKVTVDCKQYVCNGFQKCEQLLREYGQFCSKINQALHGANLRQDDSVRNLFASVKSSQSSPIIPGFGGDFNLTLLEPVSISTGSRSARSAIEDLLFDKVTIADPGYMQGYDDCMQQGPASARDLICAQYVAGYKVLPPLMDVNMEAAYTSSLLGSIAGVGWTAGLSSFAAIPFAQSIFYRLNGVGITQQVLSENQKLIANKFNQALGAMQTGFTTTNEAFHKVQDAVNNNAQALSKLASELSNTFGAISASIGDIIQRLDVLEQDAQIDRLINGRLTTLNAFVAQQLVRSESAALSAQLAKDKVNECVKAQSKRSGFCGQGTHIVSFVVNAPNGLYFMHVGYYPSNHIEVVSAYGLCDAANPTNCIAPVNGYFIKTNNTRIVDEWSYTGSSFYAPEPITSLNTKYVAPQVTYQNISTNLPPPLLGNSTGIDFQDELDEFFKNVSTSIPNFGSLTQINTTLLDLTYEMLSLQQVVKALNESYIDLKELGNYTYYNKWPWYIWLGFIAGLVALALCVFFILCCTGCGTNCMGKLKCNRCCDRYEEYDLEPHKVHVH</sequence>
<keyword id="KW-0002">3D-structure</keyword>
<keyword id="KW-0175">Coiled coil</keyword>
<keyword id="KW-1015">Disulfide bond</keyword>
<keyword id="KW-1170">Fusion of virus membrane with host endosomal membrane</keyword>
<keyword id="KW-1168">Fusion of virus membrane with host membrane</keyword>
<keyword id="KW-0325">Glycoprotein</keyword>
<keyword id="KW-1032">Host cell membrane</keyword>
<keyword id="KW-1043">Host membrane</keyword>
<keyword id="KW-0945">Host-virus interaction</keyword>
<keyword id="KW-0449">Lipoprotein</keyword>
<keyword id="KW-0472">Membrane</keyword>
<keyword id="KW-0564">Palmitate</keyword>
<keyword id="KW-1185">Reference proteome</keyword>
<keyword id="KW-0732">Signal</keyword>
<keyword id="KW-0812">Transmembrane</keyword>
<keyword id="KW-1133">Transmembrane helix</keyword>
<keyword id="KW-1161">Viral attachment to host cell</keyword>
<keyword id="KW-0261">Viral envelope protein</keyword>
<keyword id="KW-1162">Viral penetration into host cytoplasm</keyword>
<keyword id="KW-0946">Virion</keyword>
<keyword id="KW-0843">Virulence</keyword>
<keyword id="KW-1160">Virus entry into host cell</keyword>
<accession>K9N5Q8</accession>
<proteinExistence type="evidence at protein level"/>
<name>SPIKE_MERS1</name>
<dbReference type="EMBL" id="KC164505">
    <property type="protein sequence ID" value="AFY13307.1"/>
    <property type="molecule type" value="Genomic_RNA"/>
</dbReference>
<dbReference type="RefSeq" id="YP_007188579.1">
    <property type="nucleotide sequence ID" value="NC_038294.1"/>
</dbReference>
<dbReference type="PDB" id="4L72">
    <property type="method" value="X-ray"/>
    <property type="resolution" value="3.00 A"/>
    <property type="chains" value="B=382-585"/>
</dbReference>
<dbReference type="PDB" id="4MOD">
    <property type="method" value="X-ray"/>
    <property type="resolution" value="1.90 A"/>
    <property type="chains" value="A/B=992-1055, A/B=1250-1286"/>
</dbReference>
<dbReference type="PDB" id="4XAK">
    <property type="method" value="X-ray"/>
    <property type="resolution" value="2.45 A"/>
    <property type="chains" value="A/B=367-601"/>
</dbReference>
<dbReference type="PDB" id="4ZPT">
    <property type="method" value="X-ray"/>
    <property type="resolution" value="2.59 A"/>
    <property type="chains" value="R/S=381-588"/>
</dbReference>
<dbReference type="PDB" id="4ZPV">
    <property type="method" value="X-ray"/>
    <property type="resolution" value="3.20 A"/>
    <property type="chains" value="R/S=381-588"/>
</dbReference>
<dbReference type="PDB" id="4ZPW">
    <property type="method" value="X-ray"/>
    <property type="resolution" value="3.02 A"/>
    <property type="chains" value="R/S=381-588"/>
</dbReference>
<dbReference type="PDB" id="5GMQ">
    <property type="method" value="X-ray"/>
    <property type="resolution" value="2.70 A"/>
    <property type="chains" value="A=366-588"/>
</dbReference>
<dbReference type="PDB" id="5GR7">
    <property type="method" value="X-ray"/>
    <property type="resolution" value="2.40 A"/>
    <property type="chains" value="C=292-300"/>
</dbReference>
<dbReference type="PDB" id="5GSB">
    <property type="method" value="X-ray"/>
    <property type="resolution" value="1.80 A"/>
    <property type="chains" value="C=291-300"/>
</dbReference>
<dbReference type="PDB" id="5GSR">
    <property type="method" value="X-ray"/>
    <property type="resolution" value="2.20 A"/>
    <property type="chains" value="P/Q=292-300"/>
</dbReference>
<dbReference type="PDB" id="5GSV">
    <property type="method" value="X-ray"/>
    <property type="resolution" value="2.00 A"/>
    <property type="chains" value="C=1191-1200"/>
</dbReference>
<dbReference type="PDB" id="5GSX">
    <property type="method" value="X-ray"/>
    <property type="resolution" value="2.50 A"/>
    <property type="chains" value="C/F=1191-1200"/>
</dbReference>
<dbReference type="PDB" id="5VYH">
    <property type="method" value="X-ray"/>
    <property type="resolution" value="2.00 A"/>
    <property type="chains" value="A=18-353"/>
</dbReference>
<dbReference type="PDB" id="5W9H">
    <property type="method" value="EM"/>
    <property type="resolution" value="4.00 A"/>
    <property type="chains" value="A/D/G/p/q/r=1-1291"/>
</dbReference>
<dbReference type="PDB" id="5W9I">
    <property type="method" value="EM"/>
    <property type="resolution" value="3.60 A"/>
    <property type="chains" value="A/B/E/F/I/J=1-1291"/>
</dbReference>
<dbReference type="PDB" id="5W9J">
    <property type="method" value="EM"/>
    <property type="resolution" value="4.80 A"/>
    <property type="chains" value="A/D/G/J/K/L=1-1291"/>
</dbReference>
<dbReference type="PDB" id="5W9K">
    <property type="method" value="EM"/>
    <property type="resolution" value="4.60 A"/>
    <property type="chains" value="A/D/G/J/K/L=1-1291"/>
</dbReference>
<dbReference type="PDB" id="5W9L">
    <property type="method" value="EM"/>
    <property type="resolution" value="4.80 A"/>
    <property type="chains" value="A/B/C/D/G/J=1-1291"/>
</dbReference>
<dbReference type="PDB" id="5W9M">
    <property type="method" value="EM"/>
    <property type="resolution" value="4.70 A"/>
    <property type="chains" value="A/D/E/F/G/J=1-1291"/>
</dbReference>
<dbReference type="PDB" id="5W9N">
    <property type="method" value="EM"/>
    <property type="resolution" value="5.00 A"/>
    <property type="chains" value="A/D/G/H/I/J=1-1291"/>
</dbReference>
<dbReference type="PDB" id="5W9O">
    <property type="method" value="EM"/>
    <property type="resolution" value="4.50 A"/>
    <property type="chains" value="A/D/G/J/K/L=1-1291"/>
</dbReference>
<dbReference type="PDB" id="5W9P">
    <property type="method" value="EM"/>
    <property type="resolution" value="4.00 A"/>
    <property type="chains" value="A/B/C/H/I/J=1-1291"/>
</dbReference>
<dbReference type="PDB" id="5X4R">
    <property type="method" value="X-ray"/>
    <property type="resolution" value="1.50 A"/>
    <property type="chains" value="A=18-353"/>
</dbReference>
<dbReference type="PDB" id="5X59">
    <property type="method" value="EM"/>
    <property type="resolution" value="3.70 A"/>
    <property type="chains" value="A/B/C=18-1294"/>
</dbReference>
<dbReference type="PDB" id="5X5C">
    <property type="method" value="EM"/>
    <property type="resolution" value="4.10 A"/>
    <property type="chains" value="A/B/C=18-1294"/>
</dbReference>
<dbReference type="PDB" id="5X5F">
    <property type="method" value="EM"/>
    <property type="resolution" value="4.20 A"/>
    <property type="chains" value="A/B/C=18-1294"/>
</dbReference>
<dbReference type="PDB" id="5YY5">
    <property type="method" value="X-ray"/>
    <property type="resolution" value="2.80 A"/>
    <property type="chains" value="A/B=380-588"/>
</dbReference>
<dbReference type="PDB" id="5ZVK">
    <property type="method" value="X-ray"/>
    <property type="resolution" value="3.31 A"/>
    <property type="chains" value="A/B/C=984-1062"/>
</dbReference>
<dbReference type="PDB" id="5ZXV">
    <property type="method" value="X-ray"/>
    <property type="resolution" value="4.48 A"/>
    <property type="chains" value="A/B=381-588"/>
</dbReference>
<dbReference type="PDB" id="6C6Y">
    <property type="method" value="X-ray"/>
    <property type="resolution" value="3.32 A"/>
    <property type="chains" value="R/S=381-588"/>
</dbReference>
<dbReference type="PDB" id="6C6Z">
    <property type="method" value="X-ray"/>
    <property type="resolution" value="2.10 A"/>
    <property type="chains" value="A/B=367-589"/>
</dbReference>
<dbReference type="PDB" id="6J11">
    <property type="method" value="X-ray"/>
    <property type="resolution" value="3.00 A"/>
    <property type="chains" value="A/B/C=18-353"/>
</dbReference>
<dbReference type="PDB" id="6J2J">
    <property type="method" value="X-ray"/>
    <property type="resolution" value="2.50 A"/>
    <property type="chains" value="C/F=422-430"/>
</dbReference>
<dbReference type="PDB" id="6L8Q">
    <property type="method" value="X-ray"/>
    <property type="resolution" value="3.10 A"/>
    <property type="chains" value="B/D/F/H=367-606"/>
</dbReference>
<dbReference type="PDB" id="6PXH">
    <property type="method" value="X-ray"/>
    <property type="resolution" value="2.30 A"/>
    <property type="chains" value="A/B=18-351"/>
</dbReference>
<dbReference type="PDB" id="6WAR">
    <property type="method" value="X-ray"/>
    <property type="resolution" value="3.40 A"/>
    <property type="chains" value="A/C/E/G/I/K/M/O=367-589"/>
</dbReference>
<dbReference type="PDB" id="7C02">
    <property type="method" value="X-ray"/>
    <property type="resolution" value="2.91 A"/>
    <property type="chains" value="A/B=367-606"/>
</dbReference>
<dbReference type="PDB" id="7COE">
    <property type="method" value="X-ray"/>
    <property type="resolution" value="2.05 A"/>
    <property type="chains" value="A/D=367-589"/>
</dbReference>
<dbReference type="PDB" id="7M55">
    <property type="method" value="X-ray"/>
    <property type="resolution" value="1.40 A"/>
    <property type="chains" value="A=1230-1244"/>
</dbReference>
<dbReference type="PDB" id="7M5E">
    <property type="method" value="EM"/>
    <property type="resolution" value="2.50 A"/>
    <property type="chains" value="A/C/E=19-1294"/>
</dbReference>
<dbReference type="PDB" id="7S3M">
    <property type="method" value="X-ray"/>
    <property type="resolution" value="2.40 A"/>
    <property type="chains" value="A=1230-1244"/>
</dbReference>
<dbReference type="PDB" id="7V5J">
    <property type="method" value="EM"/>
    <property type="resolution" value="2.80 A"/>
    <property type="chains" value="A/B/C=18-1206"/>
</dbReference>
<dbReference type="PDB" id="7V5K">
    <property type="method" value="EM"/>
    <property type="resolution" value="2.80 A"/>
    <property type="chains" value="A/B/C=18-1206"/>
</dbReference>
<dbReference type="PDB" id="7V6N">
    <property type="method" value="EM"/>
    <property type="resolution" value="3.99 A"/>
    <property type="chains" value="A/B/C=18-1206"/>
</dbReference>
<dbReference type="PDB" id="7X25">
    <property type="method" value="EM"/>
    <property type="resolution" value="2.49 A"/>
    <property type="chains" value="G/I/J=1-1290"/>
</dbReference>
<dbReference type="PDB" id="7X26">
    <property type="method" value="EM"/>
    <property type="resolution" value="3.69 A"/>
    <property type="chains" value="I=381-588"/>
</dbReference>
<dbReference type="PDB" id="7X27">
    <property type="method" value="EM"/>
    <property type="resolution" value="2.49 A"/>
    <property type="chains" value="G/I/J=19-1229"/>
</dbReference>
<dbReference type="PDB" id="7X28">
    <property type="method" value="EM"/>
    <property type="resolution" value="2.49 A"/>
    <property type="chains" value="F/G/I=1-1290"/>
</dbReference>
<dbReference type="PDB" id="7X29">
    <property type="method" value="EM"/>
    <property type="resolution" value="2.49 A"/>
    <property type="chains" value="A/B/C=1-1290"/>
</dbReference>
<dbReference type="PDB" id="7X2A">
    <property type="method" value="EM"/>
    <property type="resolution" value="2.49 A"/>
    <property type="chains" value="A/B/C=1-1290"/>
</dbReference>
<dbReference type="PDB" id="8DGV">
    <property type="method" value="X-ray"/>
    <property type="resolution" value="2.30 A"/>
    <property type="chains" value="A=1221-1247"/>
</dbReference>
<dbReference type="PDB" id="8DGX">
    <property type="method" value="X-ray"/>
    <property type="resolution" value="2.89 A"/>
    <property type="chains" value="C/D=1221-1247"/>
</dbReference>
<dbReference type="PDB" id="8FAX">
    <property type="method" value="X-ray"/>
    <property type="resolution" value="2.10 A"/>
    <property type="chains" value="L=1223-1245"/>
</dbReference>
<dbReference type="PDB" id="8IDI">
    <property type="method" value="X-ray"/>
    <property type="resolution" value="1.90 A"/>
    <property type="chains" value="B/D=367-588"/>
</dbReference>
<dbReference type="PDB" id="8IDM">
    <property type="method" value="X-ray"/>
    <property type="resolution" value="3.59 A"/>
    <property type="chains" value="D=367-589"/>
</dbReference>
<dbReference type="PDB" id="8IDO">
    <property type="method" value="X-ray"/>
    <property type="resolution" value="2.50 A"/>
    <property type="chains" value="A/B=367-589"/>
</dbReference>
<dbReference type="PDB" id="8IEE">
    <property type="method" value="X-ray"/>
    <property type="resolution" value="3.21 A"/>
    <property type="chains" value="A/B=367-589"/>
</dbReference>
<dbReference type="PDB" id="8TMZ">
    <property type="method" value="X-ray"/>
    <property type="resolution" value="1.80 A"/>
    <property type="chains" value="A=1221-1247"/>
</dbReference>
<dbReference type="PDBsum" id="4L72"/>
<dbReference type="PDBsum" id="4MOD"/>
<dbReference type="PDBsum" id="4XAK"/>
<dbReference type="PDBsum" id="4ZPT"/>
<dbReference type="PDBsum" id="4ZPV"/>
<dbReference type="PDBsum" id="4ZPW"/>
<dbReference type="PDBsum" id="5GMQ"/>
<dbReference type="PDBsum" id="5GR7"/>
<dbReference type="PDBsum" id="5GSB"/>
<dbReference type="PDBsum" id="5GSR"/>
<dbReference type="PDBsum" id="5GSV"/>
<dbReference type="PDBsum" id="5GSX"/>
<dbReference type="PDBsum" id="5VYH"/>
<dbReference type="PDBsum" id="5W9H"/>
<dbReference type="PDBsum" id="5W9I"/>
<dbReference type="PDBsum" id="5W9J"/>
<dbReference type="PDBsum" id="5W9K"/>
<dbReference type="PDBsum" id="5W9L"/>
<dbReference type="PDBsum" id="5W9M"/>
<dbReference type="PDBsum" id="5W9N"/>
<dbReference type="PDBsum" id="5W9O"/>
<dbReference type="PDBsum" id="5W9P"/>
<dbReference type="PDBsum" id="5X4R"/>
<dbReference type="PDBsum" id="5X59"/>
<dbReference type="PDBsum" id="5X5C"/>
<dbReference type="PDBsum" id="5X5F"/>
<dbReference type="PDBsum" id="5YY5"/>
<dbReference type="PDBsum" id="5ZVK"/>
<dbReference type="PDBsum" id="5ZXV"/>
<dbReference type="PDBsum" id="6C6Y"/>
<dbReference type="PDBsum" id="6C6Z"/>
<dbReference type="PDBsum" id="6J11"/>
<dbReference type="PDBsum" id="6J2J"/>
<dbReference type="PDBsum" id="6L8Q"/>
<dbReference type="PDBsum" id="6PXH"/>
<dbReference type="PDBsum" id="6WAR"/>
<dbReference type="PDBsum" id="7C02"/>
<dbReference type="PDBsum" id="7COE"/>
<dbReference type="PDBsum" id="7M55"/>
<dbReference type="PDBsum" id="7M5E"/>
<dbReference type="PDBsum" id="7S3M"/>
<dbReference type="PDBsum" id="7V5J"/>
<dbReference type="PDBsum" id="7V5K"/>
<dbReference type="PDBsum" id="7V6N"/>
<dbReference type="PDBsum" id="7X25"/>
<dbReference type="PDBsum" id="7X26"/>
<dbReference type="PDBsum" id="7X27"/>
<dbReference type="PDBsum" id="7X28"/>
<dbReference type="PDBsum" id="7X29"/>
<dbReference type="PDBsum" id="7X2A"/>
<dbReference type="PDBsum" id="8DGV"/>
<dbReference type="PDBsum" id="8DGX"/>
<dbReference type="PDBsum" id="8FAX"/>
<dbReference type="PDBsum" id="8IDI"/>
<dbReference type="PDBsum" id="8IDM"/>
<dbReference type="PDBsum" id="8IDO"/>
<dbReference type="PDBsum" id="8IEE"/>
<dbReference type="PDBsum" id="8TMZ"/>
<dbReference type="EMDB" id="EMD-32960"/>
<dbReference type="SMR" id="K9N5Q8"/>
<dbReference type="BioGRID" id="4383879">
    <property type="interactions" value="13"/>
</dbReference>
<dbReference type="ComplexPortal" id="CPX-5766">
    <property type="entry name" value="MERS-CoV cleaved Spike protein complex"/>
</dbReference>
<dbReference type="ComplexPortal" id="CPX-7089">
    <property type="entry name" value="MERS-CoV uncleaved Spike protein complex"/>
</dbReference>
<dbReference type="IntAct" id="K9N5Q8">
    <property type="interactions" value="7"/>
</dbReference>
<dbReference type="BindingDB" id="K9N5Q8"/>
<dbReference type="GlyCosmos" id="K9N5Q8">
    <property type="glycosylation" value="23 sites, No reported glycans"/>
</dbReference>
<dbReference type="ABCD" id="K9N5Q8">
    <property type="antibodies" value="148 sequenced antibodies"/>
</dbReference>
<dbReference type="GeneID" id="37616432"/>
<dbReference type="SABIO-RK" id="K9N5Q8"/>
<dbReference type="EvolutionaryTrace" id="K9N5Q8"/>
<dbReference type="Proteomes" id="UP000139997">
    <property type="component" value="Genome"/>
</dbReference>
<dbReference type="GO" id="GO:0044173">
    <property type="term" value="C:host cell endoplasmic reticulum-Golgi intermediate compartment membrane"/>
    <property type="evidence" value="ECO:0007669"/>
    <property type="project" value="UniProtKB-SubCell"/>
</dbReference>
<dbReference type="GO" id="GO:0020002">
    <property type="term" value="C:host cell plasma membrane"/>
    <property type="evidence" value="ECO:0007669"/>
    <property type="project" value="UniProtKB-SubCell"/>
</dbReference>
<dbReference type="GO" id="GO:0016020">
    <property type="term" value="C:membrane"/>
    <property type="evidence" value="ECO:0007669"/>
    <property type="project" value="UniProtKB-UniRule"/>
</dbReference>
<dbReference type="GO" id="GO:0019031">
    <property type="term" value="C:viral envelope"/>
    <property type="evidence" value="ECO:0000303"/>
    <property type="project" value="ComplexPortal"/>
</dbReference>
<dbReference type="GO" id="GO:0055036">
    <property type="term" value="C:virion membrane"/>
    <property type="evidence" value="ECO:0007669"/>
    <property type="project" value="UniProtKB-SubCell"/>
</dbReference>
<dbReference type="GO" id="GO:0075509">
    <property type="term" value="P:endocytosis involved in viral entry into host cell"/>
    <property type="evidence" value="ECO:0007669"/>
    <property type="project" value="UniProtKB-UniRule"/>
</dbReference>
<dbReference type="GO" id="GO:0039654">
    <property type="term" value="P:fusion of virus membrane with host endosome membrane"/>
    <property type="evidence" value="ECO:0007669"/>
    <property type="project" value="UniProtKB-UniRule"/>
</dbReference>
<dbReference type="GO" id="GO:0019064">
    <property type="term" value="P:fusion of virus membrane with host plasma membrane"/>
    <property type="evidence" value="ECO:0007669"/>
    <property type="project" value="UniProtKB-UniRule"/>
</dbReference>
<dbReference type="GO" id="GO:0061025">
    <property type="term" value="P:membrane fusion"/>
    <property type="evidence" value="ECO:0000303"/>
    <property type="project" value="ComplexPortal"/>
</dbReference>
<dbReference type="GO" id="GO:0046598">
    <property type="term" value="P:positive regulation of viral entry into host cell"/>
    <property type="evidence" value="ECO:0000303"/>
    <property type="project" value="ComplexPortal"/>
</dbReference>
<dbReference type="GO" id="GO:0046813">
    <property type="term" value="P:receptor-mediated virion attachment to host cell"/>
    <property type="evidence" value="ECO:0000303"/>
    <property type="project" value="ComplexPortal"/>
</dbReference>
<dbReference type="CDD" id="cd21486">
    <property type="entry name" value="human_MERS-CoV_Spike_S1_RBD"/>
    <property type="match status" value="1"/>
</dbReference>
<dbReference type="CDD" id="cd21626">
    <property type="entry name" value="MERS-CoV-like_Spike_S1_NTD"/>
    <property type="match status" value="1"/>
</dbReference>
<dbReference type="CDD" id="cd22379">
    <property type="entry name" value="MERS-CoV-like_Spike_SD1-2_S1-S2_S2"/>
    <property type="match status" value="1"/>
</dbReference>
<dbReference type="DisProt" id="DP02880"/>
<dbReference type="Gene3D" id="1.20.5.300">
    <property type="match status" value="2"/>
</dbReference>
<dbReference type="Gene3D" id="2.20.210.30">
    <property type="match status" value="1"/>
</dbReference>
<dbReference type="Gene3D" id="3.30.70.1840">
    <property type="match status" value="1"/>
</dbReference>
<dbReference type="Gene3D" id="2.60.120.960">
    <property type="entry name" value="Spike glycoprotein, N-terminal domain"/>
    <property type="match status" value="1"/>
</dbReference>
<dbReference type="HAMAP" id="MF_04099">
    <property type="entry name" value="BETA_CORONA_SPIKE"/>
    <property type="match status" value="1"/>
</dbReference>
<dbReference type="InterPro" id="IPR032500">
    <property type="entry name" value="bCoV_S1_N"/>
</dbReference>
<dbReference type="InterPro" id="IPR042578">
    <property type="entry name" value="BETA_CORONA_SPIKE"/>
</dbReference>
<dbReference type="InterPro" id="IPR043607">
    <property type="entry name" value="CoV_S1_C"/>
</dbReference>
<dbReference type="InterPro" id="IPR043473">
    <property type="entry name" value="S2_sf_CoV"/>
</dbReference>
<dbReference type="InterPro" id="IPR043002">
    <property type="entry name" value="Spike_N_sf"/>
</dbReference>
<dbReference type="InterPro" id="IPR044337">
    <property type="entry name" value="Spike_S1_N_MERS-CoV-like"/>
</dbReference>
<dbReference type="InterPro" id="IPR018548">
    <property type="entry name" value="Spike_S1_RBD_bCoV"/>
</dbReference>
<dbReference type="InterPro" id="IPR044376">
    <property type="entry name" value="Spike_S1_RBD_MERS-CoV"/>
</dbReference>
<dbReference type="InterPro" id="IPR036326">
    <property type="entry name" value="Spike_S1_RBD_sf_bCoV"/>
</dbReference>
<dbReference type="InterPro" id="IPR002552">
    <property type="entry name" value="Spike_S2_CoV"/>
</dbReference>
<dbReference type="InterPro" id="IPR043614">
    <property type="entry name" value="Spike_S2_CoV_C"/>
</dbReference>
<dbReference type="InterPro" id="IPR044873">
    <property type="entry name" value="Spike_S2_CoV_HR1"/>
</dbReference>
<dbReference type="InterPro" id="IPR044874">
    <property type="entry name" value="Spike_S2_CoV_HR2"/>
</dbReference>
<dbReference type="Pfam" id="PF16451">
    <property type="entry name" value="bCoV_S1_N"/>
    <property type="match status" value="1"/>
</dbReference>
<dbReference type="Pfam" id="PF09408">
    <property type="entry name" value="bCoV_S1_RBD"/>
    <property type="match status" value="1"/>
</dbReference>
<dbReference type="Pfam" id="PF19209">
    <property type="entry name" value="CoV_S1_C"/>
    <property type="match status" value="1"/>
</dbReference>
<dbReference type="Pfam" id="PF01601">
    <property type="entry name" value="CoV_S2"/>
    <property type="match status" value="1"/>
</dbReference>
<dbReference type="Pfam" id="PF19214">
    <property type="entry name" value="CoV_S2_C"/>
    <property type="match status" value="1"/>
</dbReference>
<dbReference type="SUPFAM" id="SSF111474">
    <property type="entry name" value="Coronavirus S2 glycoprotein"/>
    <property type="match status" value="2"/>
</dbReference>
<dbReference type="SUPFAM" id="SSF143587">
    <property type="entry name" value="SARS receptor-binding domain-like"/>
    <property type="match status" value="1"/>
</dbReference>
<dbReference type="PROSITE" id="PS51921">
    <property type="entry name" value="BCOV_S1_CTD"/>
    <property type="match status" value="1"/>
</dbReference>
<dbReference type="PROSITE" id="PS51922">
    <property type="entry name" value="BCOV_S1_NTD"/>
    <property type="match status" value="1"/>
</dbReference>
<dbReference type="PROSITE" id="PS51923">
    <property type="entry name" value="COV_S2_HR1"/>
    <property type="match status" value="1"/>
</dbReference>
<dbReference type="PROSITE" id="PS51924">
    <property type="entry name" value="COV_S2_HR2"/>
    <property type="match status" value="1"/>
</dbReference>
<evidence type="ECO:0000250" key="1"/>
<evidence type="ECO:0000255" key="2">
    <source>
        <dbReference type="HAMAP-Rule" id="MF_04099"/>
    </source>
</evidence>
<evidence type="ECO:0000255" key="3">
    <source>
        <dbReference type="PROSITE-ProRule" id="PRU01269"/>
    </source>
</evidence>
<evidence type="ECO:0000255" key="4">
    <source>
        <dbReference type="PROSITE-ProRule" id="PRU01270"/>
    </source>
</evidence>
<evidence type="ECO:0000269" key="5">
    <source>
    </source>
</evidence>
<evidence type="ECO:0007829" key="6">
    <source>
        <dbReference type="PDB" id="4MOD"/>
    </source>
</evidence>
<evidence type="ECO:0007829" key="7">
    <source>
        <dbReference type="PDB" id="5VYH"/>
    </source>
</evidence>
<evidence type="ECO:0007829" key="8">
    <source>
        <dbReference type="PDB" id="5X4R"/>
    </source>
</evidence>
<evidence type="ECO:0007829" key="9">
    <source>
        <dbReference type="PDB" id="6PXH"/>
    </source>
</evidence>
<evidence type="ECO:0007829" key="10">
    <source>
        <dbReference type="PDB" id="7COE"/>
    </source>
</evidence>
<evidence type="ECO:0007829" key="11">
    <source>
        <dbReference type="PDB" id="7M55"/>
    </source>
</evidence>
<evidence type="ECO:0007829" key="12">
    <source>
        <dbReference type="PDB" id="7M5E"/>
    </source>
</evidence>
<evidence type="ECO:0007829" key="13">
    <source>
        <dbReference type="PDB" id="7V5J"/>
    </source>
</evidence>
<evidence type="ECO:0007829" key="14">
    <source>
        <dbReference type="PDB" id="7V5K"/>
    </source>
</evidence>
<evidence type="ECO:0007829" key="15">
    <source>
        <dbReference type="PDB" id="7X25"/>
    </source>
</evidence>
<evidence type="ECO:0007829" key="16">
    <source>
        <dbReference type="PDB" id="7X28"/>
    </source>
</evidence>
<evidence type="ECO:0007829" key="17">
    <source>
        <dbReference type="PDB" id="7X29"/>
    </source>
</evidence>
<evidence type="ECO:0007829" key="18">
    <source>
        <dbReference type="PDB" id="8IDI"/>
    </source>
</evidence>
<comment type="function">
    <molecule>Spike protein S1</molecule>
    <text evidence="2 5">Attaches the virion to the cell membrane by interacting with host receptor, initiating the infection (By similarity). Interacts with host DPP4 to mediate virla entry.</text>
</comment>
<comment type="function">
    <molecule>Spike protein S2</molecule>
    <text evidence="2">Mediates fusion of the virion and cellular membranes by acting as a class I viral fusion protein. Under the current model, the protein has at least three conformational states: pre-fusion native state, pre-hairpin intermediate state, and post-fusion hairpin state. During viral and target cell membrane fusion, the coiled coil regions (heptad repeats) assume a trimer-of-hairpins structure, positioning the fusion peptide in close proximity to the C-terminal region of the ectodomain. The formation of this structure appears to drive apposition and subsequent fusion of viral and target cell membranes.</text>
</comment>
<comment type="function">
    <molecule>Spike protein S2'</molecule>
    <text evidence="2">Acts as a viral fusion peptide which is unmasked following S2 cleavage occurring upon virus endocytosis.</text>
</comment>
<comment type="subunit">
    <text evidence="2 5">Homotrimer; each monomer consists of a S1 and a S2 subunit. The resulting peplomers protrude from the virus surface as spikes. S1 interacts with murine DPP4.</text>
</comment>
<comment type="interaction">
    <interactant intactId="EBI-25474996">
        <id>K9N5Q8</id>
    </interactant>
    <interactant intactId="EBI-821758">
        <id>PRO_0000000092</id>
        <label>APP</label>
        <dbReference type="UniProtKB" id="P05067"/>
    </interactant>
    <organismsDiffer>true</organismsDiffer>
    <experiments>2</experiments>
</comment>
<comment type="interaction">
    <interactant intactId="EBI-25474996">
        <id>K9N5Q8</id>
    </interactant>
    <interactant intactId="EBI-25570499">
        <id>M1PFC6</id>
        <label>DPP4</label>
    </interactant>
    <organismsDiffer>true</organismsDiffer>
    <experiments>2</experiments>
</comment>
<comment type="interaction">
    <interactant intactId="EBI-25474996">
        <id>K9N5Q8</id>
    </interactant>
    <interactant intactId="EBI-2871277">
        <id>P27487</id>
        <label>DPP4</label>
    </interactant>
    <organismsDiffer>true</organismsDiffer>
    <experiments>7</experiments>
</comment>
<comment type="interaction">
    <interactant intactId="EBI-25474996">
        <id>K9N5Q8</id>
    </interactant>
    <interactant intactId="EBI-1056807">
        <id>P09958</id>
        <label>FURIN</label>
    </interactant>
    <organismsDiffer>true</organismsDiffer>
    <experiments>3</experiments>
</comment>
<comment type="subcellular location">
    <subcellularLocation>
        <location evidence="2">Virion membrane</location>
        <topology evidence="2">Single-pass type I membrane protein</topology>
    </subcellularLocation>
    <subcellularLocation>
        <location evidence="2">Host endoplasmic reticulum-Golgi intermediate compartment membrane</location>
        <topology evidence="2">Single-pass type I membrane protein</topology>
    </subcellularLocation>
    <subcellularLocation>
        <location evidence="2">Host cell membrane</location>
        <topology evidence="2">Single-pass type I membrane protein</topology>
    </subcellularLocation>
    <text evidence="2">Accumulates in the endoplasmic reticulum-Golgi intermediate compartment, where it participates in virus particle assembly. Some S oligomers are transported to the host plasma membrane, where they may mediate cell-cell fusion.</text>
</comment>
<comment type="domain">
    <text evidence="2">Fusion peptide 1 (FP1) and fusion peptide 2 (FP2) function cooperatively and have a membrane-ordering effect on lipid headgroups and shallow hydrophobic regions of target bilayers. They are considered as two domains of an extended, bipartite FP. The membrane-ordering activity is calcium-dependent and also dependent on correct folding, which is maintained by an internal disulfide bond in FP2.</text>
</comment>
<comment type="PTM">
    <text evidence="2">Specific enzymatic cleavages in vivo yield mature proteins. The precursor is processed into S1 and S2 by host cell furin or another cellular protease to yield the mature S1 and S2 proteins. Additionally, a second cleavage leads to the release of a fusion peptide after viral attachment to host cell receptor.</text>
</comment>
<comment type="PTM">
    <text evidence="2">The cytoplasmic Cys-rich domain is palmitoylated. Spike glycoprotein is digested within host endosomes.</text>
</comment>
<comment type="similarity">
    <text evidence="2">Belongs to the betacoronaviruses spike protein family.</text>
</comment>